<protein>
    <recommendedName>
        <fullName>Cytochrome b</fullName>
    </recommendedName>
    <alternativeName>
        <fullName>Complex III subunit 3</fullName>
    </alternativeName>
    <alternativeName>
        <fullName>Complex III subunit III</fullName>
    </alternativeName>
    <alternativeName>
        <fullName>Cytochrome b-c1 complex subunit 3</fullName>
    </alternativeName>
    <alternativeName>
        <fullName>Ubiquinol-cytochrome-c reductase complex cytochrome b subunit</fullName>
    </alternativeName>
</protein>
<comment type="function">
    <text evidence="2">Component of the ubiquinol-cytochrome c reductase complex (complex III or cytochrome b-c1 complex) that is part of the mitochondrial respiratory chain. The b-c1 complex mediates electron transfer from ubiquinol to cytochrome c. Contributes to the generation of a proton gradient across the mitochondrial membrane that is then used for ATP synthesis.</text>
</comment>
<comment type="cofactor">
    <cofactor evidence="2">
        <name>heme b</name>
        <dbReference type="ChEBI" id="CHEBI:60344"/>
    </cofactor>
    <text evidence="2">Binds 2 heme b groups non-covalently.</text>
</comment>
<comment type="subunit">
    <text evidence="2">The cytochrome bc1 complex contains 11 subunits: 3 respiratory subunits (MT-CYB, CYC1 and UQCRFS1), 2 core proteins (UQCRC1 and UQCRC2) and 6 low-molecular weight proteins (UQCRH/QCR6, UQCRB/QCR7, UQCRQ/QCR8, UQCR10/QCR9, UQCR11/QCR10 and a cleavage product of UQCRFS1). This cytochrome bc1 complex then forms a dimer.</text>
</comment>
<comment type="subcellular location">
    <subcellularLocation>
        <location evidence="2">Mitochondrion inner membrane</location>
        <topology evidence="2">Multi-pass membrane protein</topology>
    </subcellularLocation>
</comment>
<comment type="miscellaneous">
    <text evidence="1">Heme 1 (or BL or b562) is low-potential and absorbs at about 562 nm, and heme 2 (or BH or b566) is high-potential and absorbs at about 566 nm.</text>
</comment>
<comment type="similarity">
    <text evidence="3 4">Belongs to the cytochrome b family.</text>
</comment>
<comment type="caution">
    <text evidence="2">The full-length protein contains only eight transmembrane helices, not nine as predicted by bioinformatics tools.</text>
</comment>
<dbReference type="EMBL" id="AY926403">
    <property type="protein sequence ID" value="AAY23246.1"/>
    <property type="molecule type" value="Genomic_DNA"/>
</dbReference>
<dbReference type="EMBL" id="DQ168552">
    <property type="protein sequence ID" value="ABB82546.1"/>
    <property type="molecule type" value="Genomic_DNA"/>
</dbReference>
<dbReference type="SMR" id="Q2N2B5"/>
<dbReference type="GO" id="GO:0005743">
    <property type="term" value="C:mitochondrial inner membrane"/>
    <property type="evidence" value="ECO:0007669"/>
    <property type="project" value="UniProtKB-SubCell"/>
</dbReference>
<dbReference type="GO" id="GO:0045275">
    <property type="term" value="C:respiratory chain complex III"/>
    <property type="evidence" value="ECO:0007669"/>
    <property type="project" value="InterPro"/>
</dbReference>
<dbReference type="GO" id="GO:0046872">
    <property type="term" value="F:metal ion binding"/>
    <property type="evidence" value="ECO:0007669"/>
    <property type="project" value="UniProtKB-KW"/>
</dbReference>
<dbReference type="GO" id="GO:0008121">
    <property type="term" value="F:ubiquinol-cytochrome-c reductase activity"/>
    <property type="evidence" value="ECO:0007669"/>
    <property type="project" value="InterPro"/>
</dbReference>
<dbReference type="GO" id="GO:0006122">
    <property type="term" value="P:mitochondrial electron transport, ubiquinol to cytochrome c"/>
    <property type="evidence" value="ECO:0007669"/>
    <property type="project" value="TreeGrafter"/>
</dbReference>
<dbReference type="CDD" id="cd00290">
    <property type="entry name" value="cytochrome_b_C"/>
    <property type="match status" value="1"/>
</dbReference>
<dbReference type="CDD" id="cd00284">
    <property type="entry name" value="Cytochrome_b_N"/>
    <property type="match status" value="1"/>
</dbReference>
<dbReference type="FunFam" id="1.20.810.10:FF:000002">
    <property type="entry name" value="Cytochrome b"/>
    <property type="match status" value="1"/>
</dbReference>
<dbReference type="Gene3D" id="1.20.810.10">
    <property type="entry name" value="Cytochrome Bc1 Complex, Chain C"/>
    <property type="match status" value="1"/>
</dbReference>
<dbReference type="InterPro" id="IPR005798">
    <property type="entry name" value="Cyt_b/b6_C"/>
</dbReference>
<dbReference type="InterPro" id="IPR036150">
    <property type="entry name" value="Cyt_b/b6_C_sf"/>
</dbReference>
<dbReference type="InterPro" id="IPR005797">
    <property type="entry name" value="Cyt_b/b6_N"/>
</dbReference>
<dbReference type="InterPro" id="IPR027387">
    <property type="entry name" value="Cytb/b6-like_sf"/>
</dbReference>
<dbReference type="InterPro" id="IPR030689">
    <property type="entry name" value="Cytochrome_b"/>
</dbReference>
<dbReference type="InterPro" id="IPR048260">
    <property type="entry name" value="Cytochrome_b_C_euk/bac"/>
</dbReference>
<dbReference type="InterPro" id="IPR048259">
    <property type="entry name" value="Cytochrome_b_N_euk/bac"/>
</dbReference>
<dbReference type="InterPro" id="IPR016174">
    <property type="entry name" value="Di-haem_cyt_TM"/>
</dbReference>
<dbReference type="PANTHER" id="PTHR19271">
    <property type="entry name" value="CYTOCHROME B"/>
    <property type="match status" value="1"/>
</dbReference>
<dbReference type="PANTHER" id="PTHR19271:SF16">
    <property type="entry name" value="CYTOCHROME B"/>
    <property type="match status" value="1"/>
</dbReference>
<dbReference type="Pfam" id="PF00032">
    <property type="entry name" value="Cytochrom_B_C"/>
    <property type="match status" value="1"/>
</dbReference>
<dbReference type="Pfam" id="PF00033">
    <property type="entry name" value="Cytochrome_B"/>
    <property type="match status" value="1"/>
</dbReference>
<dbReference type="PIRSF" id="PIRSF038885">
    <property type="entry name" value="COB"/>
    <property type="match status" value="1"/>
</dbReference>
<dbReference type="SUPFAM" id="SSF81648">
    <property type="entry name" value="a domain/subunit of cytochrome bc1 complex (Ubiquinol-cytochrome c reductase)"/>
    <property type="match status" value="1"/>
</dbReference>
<dbReference type="SUPFAM" id="SSF81342">
    <property type="entry name" value="Transmembrane di-heme cytochromes"/>
    <property type="match status" value="1"/>
</dbReference>
<dbReference type="PROSITE" id="PS51003">
    <property type="entry name" value="CYTB_CTER"/>
    <property type="match status" value="1"/>
</dbReference>
<dbReference type="PROSITE" id="PS51002">
    <property type="entry name" value="CYTB_NTER"/>
    <property type="match status" value="1"/>
</dbReference>
<organism>
    <name type="scientific">Perognathus amplus</name>
    <name type="common">Arizona pocket mouse</name>
    <dbReference type="NCBI Taxonomy" id="38408"/>
    <lineage>
        <taxon>Eukaryota</taxon>
        <taxon>Metazoa</taxon>
        <taxon>Chordata</taxon>
        <taxon>Craniata</taxon>
        <taxon>Vertebrata</taxon>
        <taxon>Euteleostomi</taxon>
        <taxon>Mammalia</taxon>
        <taxon>Eutheria</taxon>
        <taxon>Euarchontoglires</taxon>
        <taxon>Glires</taxon>
        <taxon>Rodentia</taxon>
        <taxon>Castorimorpha</taxon>
        <taxon>Heteromyidae</taxon>
        <taxon>Perognathinae</taxon>
        <taxon>Perognathus</taxon>
    </lineage>
</organism>
<geneLocation type="mitochondrion"/>
<keyword id="KW-0249">Electron transport</keyword>
<keyword id="KW-0349">Heme</keyword>
<keyword id="KW-0408">Iron</keyword>
<keyword id="KW-0472">Membrane</keyword>
<keyword id="KW-0479">Metal-binding</keyword>
<keyword id="KW-0496">Mitochondrion</keyword>
<keyword id="KW-0999">Mitochondrion inner membrane</keyword>
<keyword id="KW-0679">Respiratory chain</keyword>
<keyword id="KW-0812">Transmembrane</keyword>
<keyword id="KW-1133">Transmembrane helix</keyword>
<keyword id="KW-0813">Transport</keyword>
<keyword id="KW-0830">Ubiquinone</keyword>
<sequence>MTIMRKTHPLMKMVNHAFIDLPTPSNISGWWNFGSLLGLCLILQILTGLFLSMHYTPDTLTAFSSVAHICRDVNYGWLIRYMHANGASLFFICLYFHIGRGIYYGSYLYKETWNIGIILLFLVMATAFMGYVLPWGQMSFWGATVITNLLSAIPYIGSSLVEWIWGGFSVDKATLNRFFAFHFILPFIIAAMAMVHLLFLHETGSNNPLGIPSNSDKIPFHPYYSYKDLLGGAALLAFFFTIVLFFPDALGDPDNYTPANPLNTPPHIKPEWYFLFAYAILRSIPNKLGGVIALVLSILVLALFPLLHTSNQRGLMFRPISQTLFWILVSDLFILTWIGGQPVEPPFIIIGQVASILYFTIILILFPIAGLIENKLLKW</sequence>
<feature type="chain" id="PRO_0000257930" description="Cytochrome b">
    <location>
        <begin position="1"/>
        <end position="379"/>
    </location>
</feature>
<feature type="transmembrane region" description="Helical" evidence="2">
    <location>
        <begin position="33"/>
        <end position="53"/>
    </location>
</feature>
<feature type="transmembrane region" description="Helical" evidence="2">
    <location>
        <begin position="77"/>
        <end position="98"/>
    </location>
</feature>
<feature type="transmembrane region" description="Helical" evidence="2">
    <location>
        <begin position="113"/>
        <end position="133"/>
    </location>
</feature>
<feature type="transmembrane region" description="Helical" evidence="2">
    <location>
        <begin position="178"/>
        <end position="198"/>
    </location>
</feature>
<feature type="transmembrane region" description="Helical" evidence="2">
    <location>
        <begin position="226"/>
        <end position="246"/>
    </location>
</feature>
<feature type="transmembrane region" description="Helical" evidence="2">
    <location>
        <begin position="288"/>
        <end position="308"/>
    </location>
</feature>
<feature type="transmembrane region" description="Helical" evidence="2">
    <location>
        <begin position="320"/>
        <end position="340"/>
    </location>
</feature>
<feature type="transmembrane region" description="Helical" evidence="2">
    <location>
        <begin position="347"/>
        <end position="367"/>
    </location>
</feature>
<feature type="binding site" description="axial binding residue" evidence="2">
    <location>
        <position position="83"/>
    </location>
    <ligand>
        <name>heme b</name>
        <dbReference type="ChEBI" id="CHEBI:60344"/>
        <label>b562</label>
    </ligand>
    <ligandPart>
        <name>Fe</name>
        <dbReference type="ChEBI" id="CHEBI:18248"/>
    </ligandPart>
</feature>
<feature type="binding site" description="axial binding residue" evidence="2">
    <location>
        <position position="97"/>
    </location>
    <ligand>
        <name>heme b</name>
        <dbReference type="ChEBI" id="CHEBI:60344"/>
        <label>b566</label>
    </ligand>
    <ligandPart>
        <name>Fe</name>
        <dbReference type="ChEBI" id="CHEBI:18248"/>
    </ligandPart>
</feature>
<feature type="binding site" description="axial binding residue" evidence="2">
    <location>
        <position position="182"/>
    </location>
    <ligand>
        <name>heme b</name>
        <dbReference type="ChEBI" id="CHEBI:60344"/>
        <label>b562</label>
    </ligand>
    <ligandPart>
        <name>Fe</name>
        <dbReference type="ChEBI" id="CHEBI:18248"/>
    </ligandPart>
</feature>
<feature type="binding site" description="axial binding residue" evidence="2">
    <location>
        <position position="196"/>
    </location>
    <ligand>
        <name>heme b</name>
        <dbReference type="ChEBI" id="CHEBI:60344"/>
        <label>b566</label>
    </ligand>
    <ligandPart>
        <name>Fe</name>
        <dbReference type="ChEBI" id="CHEBI:18248"/>
    </ligandPart>
</feature>
<feature type="binding site" evidence="2">
    <location>
        <position position="201"/>
    </location>
    <ligand>
        <name>a ubiquinone</name>
        <dbReference type="ChEBI" id="CHEBI:16389"/>
    </ligand>
</feature>
<feature type="sequence variant" description="In strain: Isolate LVT 403.">
    <original>V</original>
    <variation>G</variation>
    <location>
        <position position="123"/>
    </location>
</feature>
<feature type="sequence variant" description="In strain: Isolate LVT 403.">
    <original>T</original>
    <variation>A</variation>
    <location>
        <position position="323"/>
    </location>
</feature>
<evidence type="ECO:0000250" key="1"/>
<evidence type="ECO:0000250" key="2">
    <source>
        <dbReference type="UniProtKB" id="P00157"/>
    </source>
</evidence>
<evidence type="ECO:0000255" key="3">
    <source>
        <dbReference type="PROSITE-ProRule" id="PRU00967"/>
    </source>
</evidence>
<evidence type="ECO:0000255" key="4">
    <source>
        <dbReference type="PROSITE-ProRule" id="PRU00968"/>
    </source>
</evidence>
<proteinExistence type="inferred from homology"/>
<gene>
    <name type="primary">MT-CYB</name>
    <name type="synonym">COB</name>
    <name type="synonym">CYTB</name>
    <name type="synonym">MTCYB</name>
</gene>
<reference key="1">
    <citation type="journal article" date="2005" name="J. Mammal.">
        <title>Phylogenetics of the new world rodent family Heteromyidae.</title>
        <authorList>
            <person name="Alexander L.F."/>
            <person name="Riddle B.R."/>
        </authorList>
    </citation>
    <scope>NUCLEOTIDE SEQUENCE [GENOMIC DNA]</scope>
    <source>
        <strain>Isolate LVT 403</strain>
    </source>
</reference>
<reference key="2">
    <citation type="journal article" date="2005" name="J. Mammal.">
        <title>Phylogenetics of spiny pocket mice (genus Liomys): analysis of cytochrome b based on multiple heuristic approaches.</title>
        <authorList>
            <person name="Rogers D.S."/>
            <person name="Vance V.L."/>
        </authorList>
    </citation>
    <scope>NUCLEOTIDE SEQUENCE [GENOMIC DNA]</scope>
    <source>
        <strain>Isolate ACUNHC22</strain>
    </source>
</reference>
<name>CYB_PERAP</name>
<accession>Q2N2B5</accession>
<accession>Q508K0</accession>